<proteinExistence type="inferred from homology"/>
<evidence type="ECO:0000255" key="1">
    <source>
        <dbReference type="HAMAP-Rule" id="MF_00570"/>
    </source>
</evidence>
<dbReference type="EC" id="6.3.4.21" evidence="1"/>
<dbReference type="EMBL" id="FM200053">
    <property type="protein sequence ID" value="CAR59859.1"/>
    <property type="molecule type" value="Genomic_DNA"/>
</dbReference>
<dbReference type="RefSeq" id="WP_000191406.1">
    <property type="nucleotide sequence ID" value="NC_011147.1"/>
</dbReference>
<dbReference type="SMR" id="B5BBM4"/>
<dbReference type="KEGG" id="sek:SSPA1667"/>
<dbReference type="HOGENOM" id="CLU_030991_1_0_6"/>
<dbReference type="UniPathway" id="UPA00253">
    <property type="reaction ID" value="UER00457"/>
</dbReference>
<dbReference type="Proteomes" id="UP000001869">
    <property type="component" value="Chromosome"/>
</dbReference>
<dbReference type="GO" id="GO:0005829">
    <property type="term" value="C:cytosol"/>
    <property type="evidence" value="ECO:0007669"/>
    <property type="project" value="TreeGrafter"/>
</dbReference>
<dbReference type="GO" id="GO:0004516">
    <property type="term" value="F:nicotinate phosphoribosyltransferase activity"/>
    <property type="evidence" value="ECO:0007669"/>
    <property type="project" value="UniProtKB-UniRule"/>
</dbReference>
<dbReference type="GO" id="GO:0034355">
    <property type="term" value="P:NAD biosynthetic process via the salvage pathway"/>
    <property type="evidence" value="ECO:0007669"/>
    <property type="project" value="TreeGrafter"/>
</dbReference>
<dbReference type="CDD" id="cd01401">
    <property type="entry name" value="PncB_like"/>
    <property type="match status" value="1"/>
</dbReference>
<dbReference type="FunFam" id="3.20.140.10:FF:000001">
    <property type="entry name" value="Nicotinate phosphoribosyltransferase"/>
    <property type="match status" value="1"/>
</dbReference>
<dbReference type="Gene3D" id="3.20.140.10">
    <property type="entry name" value="nicotinate phosphoribosyltransferase"/>
    <property type="match status" value="1"/>
</dbReference>
<dbReference type="HAMAP" id="MF_00570">
    <property type="entry name" value="NAPRTase"/>
    <property type="match status" value="1"/>
</dbReference>
<dbReference type="InterPro" id="IPR041525">
    <property type="entry name" value="N/Namide_PRibTrfase"/>
</dbReference>
<dbReference type="InterPro" id="IPR040727">
    <property type="entry name" value="NAPRTase_N"/>
</dbReference>
<dbReference type="InterPro" id="IPR006406">
    <property type="entry name" value="Nic_PRibTrfase"/>
</dbReference>
<dbReference type="InterPro" id="IPR007229">
    <property type="entry name" value="Nic_PRibTrfase-Fam"/>
</dbReference>
<dbReference type="InterPro" id="IPR036068">
    <property type="entry name" value="Nicotinate_pribotase-like_C"/>
</dbReference>
<dbReference type="NCBIfam" id="TIGR01514">
    <property type="entry name" value="NAPRTase"/>
    <property type="match status" value="1"/>
</dbReference>
<dbReference type="NCBIfam" id="NF003704">
    <property type="entry name" value="PRK05321.1"/>
    <property type="match status" value="1"/>
</dbReference>
<dbReference type="PANTHER" id="PTHR11098">
    <property type="entry name" value="NICOTINATE PHOSPHORIBOSYLTRANSFERASE"/>
    <property type="match status" value="1"/>
</dbReference>
<dbReference type="PANTHER" id="PTHR11098:SF1">
    <property type="entry name" value="NICOTINATE PHOSPHORIBOSYLTRANSFERASE"/>
    <property type="match status" value="1"/>
</dbReference>
<dbReference type="Pfam" id="PF04095">
    <property type="entry name" value="NAPRTase"/>
    <property type="match status" value="1"/>
</dbReference>
<dbReference type="Pfam" id="PF17767">
    <property type="entry name" value="NAPRTase_N"/>
    <property type="match status" value="1"/>
</dbReference>
<dbReference type="PIRSF" id="PIRSF000484">
    <property type="entry name" value="NAPRT"/>
    <property type="match status" value="1"/>
</dbReference>
<dbReference type="SUPFAM" id="SSF51690">
    <property type="entry name" value="Nicotinate/Quinolinate PRTase C-terminal domain-like"/>
    <property type="match status" value="1"/>
</dbReference>
<dbReference type="SUPFAM" id="SSF54675">
    <property type="entry name" value="Nicotinate/Quinolinate PRTase N-terminal domain-like"/>
    <property type="match status" value="1"/>
</dbReference>
<reference key="1">
    <citation type="journal article" date="2009" name="BMC Genomics">
        <title>Pseudogene accumulation in the evolutionary histories of Salmonella enterica serovars Paratyphi A and Typhi.</title>
        <authorList>
            <person name="Holt K.E."/>
            <person name="Thomson N.R."/>
            <person name="Wain J."/>
            <person name="Langridge G.C."/>
            <person name="Hasan R."/>
            <person name="Bhutta Z.A."/>
            <person name="Quail M.A."/>
            <person name="Norbertczak H."/>
            <person name="Walker D."/>
            <person name="Simmonds M."/>
            <person name="White B."/>
            <person name="Bason N."/>
            <person name="Mungall K."/>
            <person name="Dougan G."/>
            <person name="Parkhill J."/>
        </authorList>
    </citation>
    <scope>NUCLEOTIDE SEQUENCE [LARGE SCALE GENOMIC DNA]</scope>
    <source>
        <strain>AKU_12601</strain>
    </source>
</reference>
<gene>
    <name evidence="1" type="primary">pncB</name>
    <name type="ordered locus">SSPA1667</name>
</gene>
<name>PNCB_SALPK</name>
<feature type="chain" id="PRO_1000129488" description="Nicotinate phosphoribosyltransferase">
    <location>
        <begin position="1"/>
        <end position="400"/>
    </location>
</feature>
<feature type="modified residue" description="Phosphohistidine; by autocatalysis" evidence="1">
    <location>
        <position position="220"/>
    </location>
</feature>
<organism>
    <name type="scientific">Salmonella paratyphi A (strain AKU_12601)</name>
    <dbReference type="NCBI Taxonomy" id="554290"/>
    <lineage>
        <taxon>Bacteria</taxon>
        <taxon>Pseudomonadati</taxon>
        <taxon>Pseudomonadota</taxon>
        <taxon>Gammaproteobacteria</taxon>
        <taxon>Enterobacterales</taxon>
        <taxon>Enterobacteriaceae</taxon>
        <taxon>Salmonella</taxon>
    </lineage>
</organism>
<protein>
    <recommendedName>
        <fullName evidence="1">Nicotinate phosphoribosyltransferase</fullName>
        <shortName evidence="1">NAPRTase</shortName>
        <ecNumber evidence="1">6.3.4.21</ecNumber>
    </recommendedName>
</protein>
<sequence length="400" mass="45707">MTQFASPVLHSLLDTDAYKLHMQQAVFHHYYDVQVAAEFRCRGDDLLGIYADAIREQVDAMQHLRLQEDEFQWLSGLPFFKPDYLNWLREFRYNPAQVCVTNDNGKLNIRLTGPWREVIMWEVPLLAVISELVHHYRSPNAGVDQALDALESKLVDFTALTANLDMSRFHLMDFGTRRRFSREVQQAIVKRLQQESWFVGTSNYDLARRLALTPMGTQAHEWFQAHQQISPDLATSQRAALAAWLNEYPDQLGIALTDCITMDAFLRDFGIEFASRYQGLRHDSGDPVAWGEKAIAHYEKLGIDPLTKTLVFSDNLDLQKAVELYRHFASRVQLSFGIGTRLTCDIPQVKPLNIVIKLVECNGKPVAKLSDSPGKTICHDKAFVRALRKAFDLPQVRKAS</sequence>
<accession>B5BBM4</accession>
<keyword id="KW-0436">Ligase</keyword>
<keyword id="KW-0597">Phosphoprotein</keyword>
<keyword id="KW-0662">Pyridine nucleotide biosynthesis</keyword>
<comment type="function">
    <text evidence="1">Catalyzes the synthesis of beta-nicotinate D-ribonucleotide from nicotinate and 5-phospho-D-ribose 1-phosphate at the expense of ATP.</text>
</comment>
<comment type="catalytic activity">
    <reaction evidence="1">
        <text>nicotinate + 5-phospho-alpha-D-ribose 1-diphosphate + ATP + H2O = nicotinate beta-D-ribonucleotide + ADP + phosphate + diphosphate</text>
        <dbReference type="Rhea" id="RHEA:36163"/>
        <dbReference type="ChEBI" id="CHEBI:15377"/>
        <dbReference type="ChEBI" id="CHEBI:30616"/>
        <dbReference type="ChEBI" id="CHEBI:32544"/>
        <dbReference type="ChEBI" id="CHEBI:33019"/>
        <dbReference type="ChEBI" id="CHEBI:43474"/>
        <dbReference type="ChEBI" id="CHEBI:57502"/>
        <dbReference type="ChEBI" id="CHEBI:58017"/>
        <dbReference type="ChEBI" id="CHEBI:456216"/>
        <dbReference type="EC" id="6.3.4.21"/>
    </reaction>
</comment>
<comment type="pathway">
    <text evidence="1">Cofactor biosynthesis; NAD(+) biosynthesis; nicotinate D-ribonucleotide from nicotinate: step 1/1.</text>
</comment>
<comment type="PTM">
    <text evidence="1">Transiently phosphorylated on a His residue during the reaction cycle. Phosphorylation strongly increases the affinity for substrates and increases the rate of nicotinate D-ribonucleotide production. Dephosphorylation regenerates the low-affinity form of the enzyme, leading to product release.</text>
</comment>
<comment type="similarity">
    <text evidence="1">Belongs to the NAPRTase family.</text>
</comment>